<feature type="chain" id="PRO_0000057376" description="tRNA pseudouridine synthase A">
    <location>
        <begin position="1"/>
        <end position="270"/>
    </location>
</feature>
<feature type="region of interest" description="RNA binding" evidence="1">
    <location>
        <begin position="107"/>
        <end position="111"/>
    </location>
</feature>
<feature type="region of interest" description="Interaction with tRNA" evidence="1">
    <location>
        <begin position="168"/>
        <end position="172"/>
    </location>
</feature>
<feature type="active site" description="Nucleophile" evidence="1">
    <location>
        <position position="60"/>
    </location>
</feature>
<feature type="binding site" evidence="1">
    <location>
        <position position="118"/>
    </location>
    <ligand>
        <name>substrate</name>
    </ligand>
</feature>
<feature type="site" description="Interaction with tRNA; Important for base-flipping" evidence="1">
    <location>
        <position position="58"/>
    </location>
</feature>
<feature type="site" description="Interaction with tRNA" evidence="1">
    <location>
        <position position="78"/>
    </location>
</feature>
<feature type="site" description="Interaction with tRNA" evidence="1">
    <location>
        <position position="110"/>
    </location>
</feature>
<feature type="site" description="Interaction with tRNA" evidence="1">
    <location>
        <position position="126"/>
    </location>
</feature>
<feature type="site" description="Interaction with tRNA" evidence="1">
    <location>
        <position position="139"/>
    </location>
</feature>
<accession>P65844</accession>
<accession>Q8XCR2</accession>
<reference key="1">
    <citation type="journal article" date="2002" name="Proc. Natl. Acad. Sci. U.S.A.">
        <title>Extensive mosaic structure revealed by the complete genome sequence of uropathogenic Escherichia coli.</title>
        <authorList>
            <person name="Welch R.A."/>
            <person name="Burland V."/>
            <person name="Plunkett G. III"/>
            <person name="Redford P."/>
            <person name="Roesch P."/>
            <person name="Rasko D."/>
            <person name="Buckles E.L."/>
            <person name="Liou S.-R."/>
            <person name="Boutin A."/>
            <person name="Hackett J."/>
            <person name="Stroud D."/>
            <person name="Mayhew G.F."/>
            <person name="Rose D.J."/>
            <person name="Zhou S."/>
            <person name="Schwartz D.C."/>
            <person name="Perna N.T."/>
            <person name="Mobley H.L.T."/>
            <person name="Donnenberg M.S."/>
            <person name="Blattner F.R."/>
        </authorList>
    </citation>
    <scope>NUCLEOTIDE SEQUENCE [LARGE SCALE GENOMIC DNA]</scope>
    <source>
        <strain>CFT073 / ATCC 700928 / UPEC</strain>
    </source>
</reference>
<protein>
    <recommendedName>
        <fullName evidence="1">tRNA pseudouridine synthase A</fullName>
        <ecNumber evidence="1">5.4.99.12</ecNumber>
    </recommendedName>
    <alternativeName>
        <fullName evidence="1">tRNA pseudouridine(38-40) synthase</fullName>
    </alternativeName>
    <alternativeName>
        <fullName evidence="1">tRNA pseudouridylate synthase I</fullName>
    </alternativeName>
    <alternativeName>
        <fullName evidence="1">tRNA-uridine isomerase I</fullName>
    </alternativeName>
</protein>
<proteinExistence type="inferred from homology"/>
<comment type="function">
    <text evidence="1">Formation of pseudouridine at positions 38, 39 and 40 in the anticodon stem and loop of transfer RNAs.</text>
</comment>
<comment type="catalytic activity">
    <reaction evidence="1">
        <text>uridine(38/39/40) in tRNA = pseudouridine(38/39/40) in tRNA</text>
        <dbReference type="Rhea" id="RHEA:22376"/>
        <dbReference type="Rhea" id="RHEA-COMP:10085"/>
        <dbReference type="Rhea" id="RHEA-COMP:10087"/>
        <dbReference type="ChEBI" id="CHEBI:65314"/>
        <dbReference type="ChEBI" id="CHEBI:65315"/>
        <dbReference type="EC" id="5.4.99.12"/>
    </reaction>
</comment>
<comment type="subunit">
    <text evidence="1">Homodimer.</text>
</comment>
<comment type="similarity">
    <text evidence="1">Belongs to the tRNA pseudouridine synthase TruA family.</text>
</comment>
<evidence type="ECO:0000255" key="1">
    <source>
        <dbReference type="HAMAP-Rule" id="MF_00171"/>
    </source>
</evidence>
<dbReference type="EC" id="5.4.99.12" evidence="1"/>
<dbReference type="EMBL" id="AE014075">
    <property type="protein sequence ID" value="AAN81315.1"/>
    <property type="molecule type" value="Genomic_DNA"/>
</dbReference>
<dbReference type="RefSeq" id="WP_001283590.1">
    <property type="nucleotide sequence ID" value="NZ_CP051263.1"/>
</dbReference>
<dbReference type="SMR" id="P65844"/>
<dbReference type="STRING" id="199310.c2863"/>
<dbReference type="GeneID" id="75172446"/>
<dbReference type="KEGG" id="ecc:c2863"/>
<dbReference type="eggNOG" id="COG0101">
    <property type="taxonomic scope" value="Bacteria"/>
</dbReference>
<dbReference type="HOGENOM" id="CLU_014673_0_2_6"/>
<dbReference type="BioCyc" id="ECOL199310:C2863-MONOMER"/>
<dbReference type="Proteomes" id="UP000001410">
    <property type="component" value="Chromosome"/>
</dbReference>
<dbReference type="GO" id="GO:0003723">
    <property type="term" value="F:RNA binding"/>
    <property type="evidence" value="ECO:0007669"/>
    <property type="project" value="InterPro"/>
</dbReference>
<dbReference type="GO" id="GO:0160147">
    <property type="term" value="F:tRNA pseudouridine(38-40) synthase activity"/>
    <property type="evidence" value="ECO:0007669"/>
    <property type="project" value="UniProtKB-EC"/>
</dbReference>
<dbReference type="GO" id="GO:0031119">
    <property type="term" value="P:tRNA pseudouridine synthesis"/>
    <property type="evidence" value="ECO:0007669"/>
    <property type="project" value="UniProtKB-UniRule"/>
</dbReference>
<dbReference type="CDD" id="cd02570">
    <property type="entry name" value="PseudoU_synth_EcTruA"/>
    <property type="match status" value="1"/>
</dbReference>
<dbReference type="FunFam" id="3.30.70.580:FF:000001">
    <property type="entry name" value="tRNA pseudouridine synthase A"/>
    <property type="match status" value="1"/>
</dbReference>
<dbReference type="FunFam" id="3.30.70.660:FF:000001">
    <property type="entry name" value="tRNA pseudouridine synthase A"/>
    <property type="match status" value="1"/>
</dbReference>
<dbReference type="Gene3D" id="3.30.70.660">
    <property type="entry name" value="Pseudouridine synthase I, catalytic domain, C-terminal subdomain"/>
    <property type="match status" value="1"/>
</dbReference>
<dbReference type="Gene3D" id="3.30.70.580">
    <property type="entry name" value="Pseudouridine synthase I, catalytic domain, N-terminal subdomain"/>
    <property type="match status" value="1"/>
</dbReference>
<dbReference type="HAMAP" id="MF_00171">
    <property type="entry name" value="TruA"/>
    <property type="match status" value="1"/>
</dbReference>
<dbReference type="InterPro" id="IPR020103">
    <property type="entry name" value="PsdUridine_synth_cat_dom_sf"/>
</dbReference>
<dbReference type="InterPro" id="IPR001406">
    <property type="entry name" value="PsdUridine_synth_TruA"/>
</dbReference>
<dbReference type="InterPro" id="IPR020097">
    <property type="entry name" value="PsdUridine_synth_TruA_a/b_dom"/>
</dbReference>
<dbReference type="InterPro" id="IPR020095">
    <property type="entry name" value="PsdUridine_synth_TruA_C"/>
</dbReference>
<dbReference type="InterPro" id="IPR020094">
    <property type="entry name" value="TruA/RsuA/RluB/E/F_N"/>
</dbReference>
<dbReference type="NCBIfam" id="TIGR00071">
    <property type="entry name" value="hisT_truA"/>
    <property type="match status" value="1"/>
</dbReference>
<dbReference type="PANTHER" id="PTHR11142">
    <property type="entry name" value="PSEUDOURIDYLATE SYNTHASE"/>
    <property type="match status" value="1"/>
</dbReference>
<dbReference type="PANTHER" id="PTHR11142:SF0">
    <property type="entry name" value="TRNA PSEUDOURIDINE SYNTHASE-LIKE 1"/>
    <property type="match status" value="1"/>
</dbReference>
<dbReference type="Pfam" id="PF01416">
    <property type="entry name" value="PseudoU_synth_1"/>
    <property type="match status" value="2"/>
</dbReference>
<dbReference type="PIRSF" id="PIRSF001430">
    <property type="entry name" value="tRNA_psdUrid_synth"/>
    <property type="match status" value="1"/>
</dbReference>
<dbReference type="SUPFAM" id="SSF55120">
    <property type="entry name" value="Pseudouridine synthase"/>
    <property type="match status" value="1"/>
</dbReference>
<keyword id="KW-0413">Isomerase</keyword>
<keyword id="KW-1185">Reference proteome</keyword>
<keyword id="KW-0819">tRNA processing</keyword>
<organism>
    <name type="scientific">Escherichia coli O6:H1 (strain CFT073 / ATCC 700928 / UPEC)</name>
    <dbReference type="NCBI Taxonomy" id="199310"/>
    <lineage>
        <taxon>Bacteria</taxon>
        <taxon>Pseudomonadati</taxon>
        <taxon>Pseudomonadota</taxon>
        <taxon>Gammaproteobacteria</taxon>
        <taxon>Enterobacterales</taxon>
        <taxon>Enterobacteriaceae</taxon>
        <taxon>Escherichia</taxon>
    </lineage>
</organism>
<gene>
    <name evidence="1" type="primary">truA</name>
    <name type="ordered locus">c2863</name>
</gene>
<sequence length="270" mass="30385">MSDQQQPPVYKIALGIEYDGSKYYGWQRQNEVRSVQEKLEKALSQVANEPITVFCAGRTDAGVHGTGQVVHFETTAQRKDAAWTLGVNANLPGDIAVRWVKAVPDDFHARFSATARRYRYIIYNHRLRPAVLSKGVTHFYEPLDAERMHRAAQCLLGENDFTSFRAVQCQSRTPWRNVMHINVTRHGPYVVVDIKANAFVHHMVRNIVGSLMEVGAHNQPESWIAELLAAKDRTLAAATAKAEGLYLVAVDYPDRYDLPKPPMGPLFLAD</sequence>
<name>TRUA_ECOL6</name>